<accession>O43103</accession>
<accession>A0A0D1C9V1</accession>
<accession>Q4P3Z8</accession>
<evidence type="ECO:0000250" key="1"/>
<evidence type="ECO:0000255" key="2">
    <source>
        <dbReference type="PROSITE-ProRule" id="PRU00258"/>
    </source>
</evidence>
<evidence type="ECO:0000256" key="3">
    <source>
        <dbReference type="SAM" id="MobiDB-lite"/>
    </source>
</evidence>
<evidence type="ECO:0000305" key="4"/>
<dbReference type="EC" id="6.-.-.-"/>
<dbReference type="EMBL" id="U62738">
    <property type="protein sequence ID" value="AAB93493.1"/>
    <property type="status" value="ALT_FRAME"/>
    <property type="molecule type" value="Genomic_DNA"/>
</dbReference>
<dbReference type="EMBL" id="CM003143">
    <property type="protein sequence ID" value="KIS70092.1"/>
    <property type="molecule type" value="Genomic_DNA"/>
</dbReference>
<dbReference type="PIR" id="T52486">
    <property type="entry name" value="T52486"/>
</dbReference>
<dbReference type="RefSeq" id="XP_011388352.1">
    <property type="nucleotide sequence ID" value="XM_011390050.1"/>
</dbReference>
<dbReference type="SMR" id="O43103"/>
<dbReference type="FunCoup" id="O43103">
    <property type="interactions" value="248"/>
</dbReference>
<dbReference type="STRING" id="237631.O43103"/>
<dbReference type="EnsemblFungi" id="KIS70092">
    <property type="protein sequence ID" value="KIS70092"/>
    <property type="gene ID" value="UMAG_10189"/>
</dbReference>
<dbReference type="GeneID" id="23566253"/>
<dbReference type="KEGG" id="uma:UMAG_10189"/>
<dbReference type="VEuPathDB" id="FungiDB:UMAG_10189"/>
<dbReference type="eggNOG" id="KOG1176">
    <property type="taxonomic scope" value="Eukaryota"/>
</dbReference>
<dbReference type="eggNOG" id="KOG1178">
    <property type="taxonomic scope" value="Eukaryota"/>
</dbReference>
<dbReference type="InParanoid" id="O43103"/>
<dbReference type="OrthoDB" id="408177at2759"/>
<dbReference type="BioCyc" id="MetaCyc:MONOMER-18969"/>
<dbReference type="UniPathway" id="UPA00783"/>
<dbReference type="Proteomes" id="UP000000561">
    <property type="component" value="Chromosome 4"/>
</dbReference>
<dbReference type="GO" id="GO:0005737">
    <property type="term" value="C:cytoplasm"/>
    <property type="evidence" value="ECO:0000318"/>
    <property type="project" value="GO_Central"/>
</dbReference>
<dbReference type="GO" id="GO:0016874">
    <property type="term" value="F:ligase activity"/>
    <property type="evidence" value="ECO:0007669"/>
    <property type="project" value="UniProtKB-KW"/>
</dbReference>
<dbReference type="GO" id="GO:0031177">
    <property type="term" value="F:phosphopantetheine binding"/>
    <property type="evidence" value="ECO:0000318"/>
    <property type="project" value="GO_Central"/>
</dbReference>
<dbReference type="GO" id="GO:0043041">
    <property type="term" value="P:amino acid activation for nonribosomal peptide biosynthetic process"/>
    <property type="evidence" value="ECO:0000318"/>
    <property type="project" value="GO_Central"/>
</dbReference>
<dbReference type="GO" id="GO:0031169">
    <property type="term" value="P:ferrichrome biosynthetic process"/>
    <property type="evidence" value="ECO:0007669"/>
    <property type="project" value="UniProtKB-UniPathway"/>
</dbReference>
<dbReference type="GO" id="GO:0044550">
    <property type="term" value="P:secondary metabolite biosynthetic process"/>
    <property type="evidence" value="ECO:0000318"/>
    <property type="project" value="GO_Central"/>
</dbReference>
<dbReference type="CDD" id="cd05918">
    <property type="entry name" value="A_NRPS_SidN3_like"/>
    <property type="match status" value="3"/>
</dbReference>
<dbReference type="CDD" id="cd19542">
    <property type="entry name" value="CT_NRPS-like"/>
    <property type="match status" value="3"/>
</dbReference>
<dbReference type="FunFam" id="3.30.559.30:FF:000030">
    <property type="entry name" value="Hydroxamate-type ferrichrome siderophore peptide synthetase"/>
    <property type="match status" value="1"/>
</dbReference>
<dbReference type="FunFam" id="3.30.300.30:FF:000015">
    <property type="entry name" value="Nonribosomal peptide synthase SidD"/>
    <property type="match status" value="2"/>
</dbReference>
<dbReference type="FunFam" id="3.30.300.30:FF:000033">
    <property type="entry name" value="Nonribosomal siderophore peptide synthase SidC"/>
    <property type="match status" value="1"/>
</dbReference>
<dbReference type="FunFam" id="3.40.50.12780:FF:000024">
    <property type="entry name" value="Nonribosomal siderophore peptide synthase SidC"/>
    <property type="match status" value="2"/>
</dbReference>
<dbReference type="Gene3D" id="3.30.300.30">
    <property type="match status" value="3"/>
</dbReference>
<dbReference type="Gene3D" id="1.10.1200.10">
    <property type="entry name" value="ACP-like"/>
    <property type="match status" value="4"/>
</dbReference>
<dbReference type="Gene3D" id="3.30.559.10">
    <property type="entry name" value="Chloramphenicol acetyltransferase-like domain"/>
    <property type="match status" value="4"/>
</dbReference>
<dbReference type="Gene3D" id="3.40.50.12780">
    <property type="entry name" value="N-terminal domain of ligase-like"/>
    <property type="match status" value="3"/>
</dbReference>
<dbReference type="Gene3D" id="3.30.559.30">
    <property type="entry name" value="Nonribosomal peptide synthetase, condensation domain"/>
    <property type="match status" value="4"/>
</dbReference>
<dbReference type="InterPro" id="IPR036736">
    <property type="entry name" value="ACP-like_sf"/>
</dbReference>
<dbReference type="InterPro" id="IPR045851">
    <property type="entry name" value="AMP-bd_C_sf"/>
</dbReference>
<dbReference type="InterPro" id="IPR020845">
    <property type="entry name" value="AMP-binding_CS"/>
</dbReference>
<dbReference type="InterPro" id="IPR000873">
    <property type="entry name" value="AMP-dep_synth/lig_dom"/>
</dbReference>
<dbReference type="InterPro" id="IPR042099">
    <property type="entry name" value="ANL_N_sf"/>
</dbReference>
<dbReference type="InterPro" id="IPR023213">
    <property type="entry name" value="CAT-like_dom_sf"/>
</dbReference>
<dbReference type="InterPro" id="IPR001242">
    <property type="entry name" value="Condensatn"/>
</dbReference>
<dbReference type="InterPro" id="IPR020806">
    <property type="entry name" value="PKS_PP-bd"/>
</dbReference>
<dbReference type="InterPro" id="IPR009081">
    <property type="entry name" value="PP-bd_ACP"/>
</dbReference>
<dbReference type="InterPro" id="IPR006162">
    <property type="entry name" value="Ppantetheine_attach_site"/>
</dbReference>
<dbReference type="NCBIfam" id="NF003417">
    <property type="entry name" value="PRK04813.1"/>
    <property type="match status" value="3"/>
</dbReference>
<dbReference type="PANTHER" id="PTHR45527:SF2">
    <property type="entry name" value="FERRICROCIN SYNTHETASE (NONRIBOSOMAL PEPTIDE SIDEROPHORE SYNTHASE ) (EUROFUNG)"/>
    <property type="match status" value="1"/>
</dbReference>
<dbReference type="PANTHER" id="PTHR45527">
    <property type="entry name" value="NONRIBOSOMAL PEPTIDE SYNTHETASE"/>
    <property type="match status" value="1"/>
</dbReference>
<dbReference type="Pfam" id="PF00501">
    <property type="entry name" value="AMP-binding"/>
    <property type="match status" value="3"/>
</dbReference>
<dbReference type="Pfam" id="PF00668">
    <property type="entry name" value="Condensation"/>
    <property type="match status" value="4"/>
</dbReference>
<dbReference type="Pfam" id="PF00550">
    <property type="entry name" value="PP-binding"/>
    <property type="match status" value="4"/>
</dbReference>
<dbReference type="SMART" id="SM00823">
    <property type="entry name" value="PKS_PP"/>
    <property type="match status" value="4"/>
</dbReference>
<dbReference type="SMART" id="SM01294">
    <property type="entry name" value="PKS_PP_betabranch"/>
    <property type="match status" value="1"/>
</dbReference>
<dbReference type="SUPFAM" id="SSF56801">
    <property type="entry name" value="Acetyl-CoA synthetase-like"/>
    <property type="match status" value="3"/>
</dbReference>
<dbReference type="SUPFAM" id="SSF47336">
    <property type="entry name" value="ACP-like"/>
    <property type="match status" value="4"/>
</dbReference>
<dbReference type="SUPFAM" id="SSF52777">
    <property type="entry name" value="CoA-dependent acyltransferases"/>
    <property type="match status" value="8"/>
</dbReference>
<dbReference type="PROSITE" id="PS00455">
    <property type="entry name" value="AMP_BINDING"/>
    <property type="match status" value="3"/>
</dbReference>
<dbReference type="PROSITE" id="PS50075">
    <property type="entry name" value="CARRIER"/>
    <property type="match status" value="4"/>
</dbReference>
<dbReference type="PROSITE" id="PS00012">
    <property type="entry name" value="PHOSPHOPANTETHEINE"/>
    <property type="match status" value="3"/>
</dbReference>
<comment type="function">
    <text>Multidomain peptide synthetase involved in ferrichrome biosynthesis.</text>
</comment>
<comment type="cofactor">
    <cofactor evidence="1">
        <name>pantetheine 4'-phosphate</name>
        <dbReference type="ChEBI" id="CHEBI:47942"/>
    </cofactor>
    <text evidence="1">Binds 4 phosphopantetheines covalently.</text>
</comment>
<comment type="pathway">
    <text>Siderophore biosynthesis; ferrichrome biosynthesis.</text>
</comment>
<comment type="similarity">
    <text evidence="4">Belongs to the ATP-dependent AMP-binding enzyme family.</text>
</comment>
<comment type="sequence caution" evidence="4">
    <conflict type="frameshift">
        <sequence resource="EMBL-CDS" id="AAB93493"/>
    </conflict>
</comment>
<sequence>MSVSKNAHAPFPDVTGLRTSGPDFSRVGPQCKLLRVQQSLHLDARAASSFSGQDLHLALLSAWCVILFHYGSHEATNIEVLHTSQHGHETLVELDFAEQRELVPFTPSQLAAFVHQARQQQLPAKDLDHGYAAFYQPSHTNEPSPHFQQLQLSSRPDISLALSYHLQGSAQLVLEMKAAPSVHSHQSAQLQLRQVAALLESYHSDTQQHALSVERFDWKLRASDNPNYQHLPDPNHIQDRHADRLETEFEYFAATTPDALALDFRFDLQDLKSTKWSYAEMNQRAEKVKHLLWSHGVGSASSDPQADHIVALYLEKSPETYLSFIGVLKAGAAWCPIDTDWPASRRQALLAKSNAKIVLTHDDKISEQLRHDLESQLVKDKGEITAIRLDQLDAELSQVQVVPPANANRSIQQLAYMIWTSGTTGLPKGVGIQHLAIIQAMRALRIYIPYGKDKIGTDQIRYLQYSAYNFDLSIMDCFYTWGLGGTICSCPRGVLLQDLVEVGNSLQPTHTLLTPAVMAMTERHRVPSLKVVISGGEKLSQVVADEWSKDCCLLNLYGPAEATLIAMNRRVPFGDRVKAPNIGVALPTVSCHALDKYDQIVIKGAVGELVLGGPQLARGYVGDPVKTADKFFPHPQLGRVYRTGDLVRQLDNQEFEYLGRIDDQVKINGIRIELLEINAAIKNSHDKIKDSETMAFSKKDNESEQQIINFSALPGGEPGQLLRTDQDAIAVARELQANAKDSLPSYMVPNLFVILSHFPRTSSAKIDRVALKNVLASFDQLDWENKLANEGDDDQVDPATAQAEACLRKWLAKLCNVDASKIGRKTPFTSVGLDSIRAMMFSKRVSEEGFAVSVLDVARFPTLKSLGEHLQSSGASSEERAKRAASFLADFDAAFRPVVSSWVKQRKADASAIQSILPCTPLQEGMLAESQRDSSSYRIQRQYRLASDCDQARLSKALIETVAHFDSLRTSFADVGSLDVGLHQREWPFQPHFLQIVWKSFTPLIEQLDVDDGSDAEQAILSAAKTKLDLDPFGTSPPVAFLFVKQALSRSLVVVAHHSTYDARSLGIFEDHVEAVYNRQKPPTSLQFSTALAQILPIDQTEAQRHADVWQKALSNYPRGEYASFPTLSLTRPSEADADQASLHQSRYLEANINWAKIESACRELGVSARPLVQTAWALVLSAFTESQHLILGDSVSGRTLSAELDLAYGPVLSTVPVPFMLRPEQKLGNLIKQMDDFQTSIMEAQHTDLGAIRRMLQVPPRESLFHSVFVLEPAPEQPEDIDSSQFRLSKMADLGVATEHVLGVEVLPASDGSVKLGLSWQKNIISEGFGGLILEQFDRSLTALCSSLDADVGSLLYCHPRSDQQASSFYSVTKPVSKQKCSSATFTGVASSLNKQAISDNSNAVEIYQDMADSPSSRKPAATMSYPELEQASNGVANLFRHLPRNSVVGVCLERGLESYIVPLAILKAGHAYLPLDATLPLDRKKELVKDSGAALIVASSKFTDFDSLTGVEMLGTDSRQFKDAVKDGKATVSVESRSDDVAFIIYTSGSTGKPKGCLLTQANLAAAVEGFYYNYEKEAPGSFESRARFLARSAEAFDVHLLEIFLSLRVGATIVTGPRALIHDDIAKTMSTLEVTHACVVPSLFFSKGKRIEPSVVPSLRVLIIGGEALTQDLCQIWGSEGSERPVVLNAYGPSEATIGNSVARVSKKSRPSNIGAPFPGTQYLVLKDVNGQLVPTLRGEPGELYIGGEQVAKGYLNRPDSSSFITYQGQQIYRTGDMVRLHPSDEAEYLGRIDGSQVKVRGARLELAEVDAALSASLNENLGTVGTAVTIHADHPKIEGAARLVSFFAQDCVRTKAQDSVDPGALLVQAPEAVKQSAELRRSVRARLPQYMVPSLVLALTYLPISPLSGKADRRLLKELYHSIDPSKLSTLSDKNESRQRELTDSEQTVAELVRSSVRLSSDVHLMHDLDLIMAGLDSLTVVTLANKLRKHGYDATVSSIMNEPTIEAIAGRRIDKLSSNETSDVEWKQTVSQLTDKVRSLPQYRGTQIETALPCVPIQVALVSQAVSDDRSTPRYITTISIDLSSNEFSADRIRNAWMTALSRHEIYRTVFAEVDRTLVQVVLSAESLTSNWSATSEPIPSPDSLADYHASTAKDIVANISSVPALRLKLWQGENGAPTLTLTCSHAIYDGDSIRMLLKEASDCLVTKSKVVPALPFQEAARCIVGDAEDEEAKQFWTTTLADFLPTTVPNLTGVRPEHNVSRGEELTIASHLSFTQLEKAARAAKVTIQSILVAAFAHLLGLYAGESDVTLGLVLSGRSIPVDGVESIHGPCVTTVPLRLTDARSNASSDLCKRAHQAVNAILPHQHVSLPQLMRWLDLSKAPFEALFSYLGQSERSSEKPYFSERASQMERDYSLALEVSAVGDAVNLHLAFDTRSMPAEQAKRMLCQYDGFLTVFTGTKRVDDDGKHLSILNKSCYVPTSANETIVARFTEHVKANPDAPAIVFASSMQEPPKVTSYAELDSLSTKIAFHLVHAAGPFVGVHLNKEGPELYATILAIWKAGKAYLPLDPSLPVERLSYMIESVGDCPVVASHSTKENLASFRCKVLDLKELVKPRSGAHELPSQNLDALCYLLFTSGSTGKPKAVQINQRALAGALYSWERILPFTRTSRFLQLASIGFDVCLIEMCMPLSLGFSIGTAPKQELLEDLTHSIKHLGITIADLPAALAGAVHPEDVRLEWLMSGGDVIDSRVVDEWNHAKRLLINAWGPTEATIGNTLGQVKRGATRNLIGGVYPSSSMFVLDENSTRILPSGAIGELAVGGPQLADCYYGREELTAEKFILLEDGTRVYRTGDLGRFLVDDTVECLGRIGSDRQVKVNGQRMELDEVCSVISAQAGVYDADVQYLKHPSMGSKQLVAFVAAAETQAKQGDMDVRDDDKAIDLCIRLEQEAAKRLATYMVPTHWIVMKHGLPLTHNNKTDHKALAAFYGRMDATLLRSLGAKREGAISSHAWTQSELKLRALVSDFCNVPQDQLARNTSFHRLGIDSISAIRLVKQLRTSGFTFSVADVLSTPNIAALADKQMQSSACSSDHAQPNEGLNEWIGQISSVAENEAWKWSSKDSLVSVLPCTPLQSGMIAQSLASAGGLYFHHHAFELQSTEKQHVVAAWRKLVERLDILRTTFHPVDGLHPWTQAVHSEVQPRIVQHSGSFQSCGLDAIDGQPSFQDEQAFRTPPFALHLWSQEGKLVVLISIHHALYDGSSLPQLLEDFEALITGNQAKLTSRLPFYKLVPSLLSQDEDVQHWVNALHAFQPTLLCKRSNKPSGAAVLLEKRLALTSQELESRCRAIGVSPQVLCNLTFGKLLAIESQTRDVCFGQLFGLLDLMPEADTCVGPAFNTTATRIRFQELDAPVSKLATTLQQANDAGRPHRRAALRDVQAKLGRGQLFDALFDYQRSYDQEDSKLRQIELQSDGTERAQYTLNVAFVQGPSQMSIVAKADGNRYDQKALEGVVYRLEHLLEHLSIRVEEPISVLPDVFGETAFPLHLAQVSVANGTSTSKASAQNSANQALSQDGSKLASIISQIAGIDEMELHGETRLSQLGLDSISAIRIASQARKAGLNLRMGEIVAGETINAILSARSQTNATKSSDHVNRNGRGNGHARVSLETAKRVAARLAIDFEQVERVLPVLPGQKLWLATWAQSQGGGGFSFAYRLAGAEADKVKETWQKLRQLQPILRTAFLVHHDGGASQVVLKADSVSAGSGFAEVQVERDAELTAKDVVGRRAAQGWPDLTSPPVELTLVGEIVVFSLHHVLYDAFSIEFLARDFGSLYNAGELVSSNQWPEVVEHIVEEQQRTRGDAQEYWCRALAPGSSGLLADRPGSTGEAWHVQHNAISLSSAVDVRIRKAGLTLAGVLLAAWSTLLSERMHDASPVFGLYQLGRSSSFESIDKVHGPLLNCLPIQLRGGSLLDKARAAVSELRLRAKFEQTDLQDAHRWAGLSQHQACYNTFVNILFGDQLDQHLEMHQLDLGHPLDYSHHSQHSTHDRTPPSTPHVALPWQPDVNLDVVLKNHAVDIAIKANTSVVAQADLHTLVNRLVQLVHATLELL</sequence>
<gene>
    <name type="primary">SID2</name>
    <name type="ORF">UMAG_10189</name>
</gene>
<feature type="chain" id="PRO_0000193098" description="Ferrichrome siderophore peptide synthetase">
    <location>
        <begin position="1"/>
        <end position="4114"/>
    </location>
</feature>
<feature type="domain" description="Carrier 1" evidence="2">
    <location>
        <begin position="797"/>
        <end position="874"/>
    </location>
</feature>
<feature type="domain" description="Carrier 2" evidence="2">
    <location>
        <begin position="1947"/>
        <end position="2021"/>
    </location>
</feature>
<feature type="domain" description="Carrier 3" evidence="2">
    <location>
        <begin position="3020"/>
        <end position="3093"/>
    </location>
</feature>
<feature type="domain" description="Carrier 4" evidence="2">
    <location>
        <begin position="3574"/>
        <end position="3650"/>
    </location>
</feature>
<feature type="region of interest" description="Disordered" evidence="3">
    <location>
        <begin position="4040"/>
        <end position="4061"/>
    </location>
</feature>
<feature type="compositionally biased region" description="Basic and acidic residues" evidence="3">
    <location>
        <begin position="4041"/>
        <end position="4054"/>
    </location>
</feature>
<feature type="modified residue" description="O-(pantetheine 4'-phosphoryl)serine" evidence="2">
    <location>
        <position position="835"/>
    </location>
</feature>
<feature type="modified residue" description="O-(pantetheine 4'-phosphoryl)serine" evidence="2">
    <location>
        <position position="1982"/>
    </location>
</feature>
<feature type="modified residue" description="O-(pantetheine 4'-phosphoryl)serine" evidence="2">
    <location>
        <position position="3054"/>
    </location>
</feature>
<feature type="modified residue" description="O-(pantetheine 4'-phosphoryl)serine" evidence="2">
    <location>
        <position position="3611"/>
    </location>
</feature>
<protein>
    <recommendedName>
        <fullName>Ferrichrome siderophore peptide synthetase</fullName>
        <ecNumber>6.-.-.-</ecNumber>
    </recommendedName>
</protein>
<organism>
    <name type="scientific">Mycosarcoma maydis</name>
    <name type="common">Corn smut fungus</name>
    <name type="synonym">Ustilago maydis</name>
    <dbReference type="NCBI Taxonomy" id="5270"/>
    <lineage>
        <taxon>Eukaryota</taxon>
        <taxon>Fungi</taxon>
        <taxon>Dikarya</taxon>
        <taxon>Basidiomycota</taxon>
        <taxon>Ustilaginomycotina</taxon>
        <taxon>Ustilaginomycetes</taxon>
        <taxon>Ustilaginales</taxon>
        <taxon>Ustilaginaceae</taxon>
        <taxon>Mycosarcoma</taxon>
    </lineage>
</organism>
<name>SID2_MYCMD</name>
<proteinExistence type="inferred from homology"/>
<reference key="1">
    <citation type="journal article" date="2006" name="Nature">
        <title>Insights from the genome of the biotrophic fungal plant pathogen Ustilago maydis.</title>
        <authorList>
            <person name="Kaemper J."/>
            <person name="Kahmann R."/>
            <person name="Boelker M."/>
            <person name="Ma L.-J."/>
            <person name="Brefort T."/>
            <person name="Saville B.J."/>
            <person name="Banuett F."/>
            <person name="Kronstad J.W."/>
            <person name="Gold S.E."/>
            <person name="Mueller O."/>
            <person name="Perlin M.H."/>
            <person name="Woesten H.A.B."/>
            <person name="de Vries R."/>
            <person name="Ruiz-Herrera J."/>
            <person name="Reynaga-Pena C.G."/>
            <person name="Snetselaar K."/>
            <person name="McCann M."/>
            <person name="Perez-Martin J."/>
            <person name="Feldbruegge M."/>
            <person name="Basse C.W."/>
            <person name="Steinberg G."/>
            <person name="Ibeas J.I."/>
            <person name="Holloman W."/>
            <person name="Guzman P."/>
            <person name="Farman M.L."/>
            <person name="Stajich J.E."/>
            <person name="Sentandreu R."/>
            <person name="Gonzalez-Prieto J.M."/>
            <person name="Kennell J.C."/>
            <person name="Molina L."/>
            <person name="Schirawski J."/>
            <person name="Mendoza-Mendoza A."/>
            <person name="Greilinger D."/>
            <person name="Muench K."/>
            <person name="Roessel N."/>
            <person name="Scherer M."/>
            <person name="Vranes M."/>
            <person name="Ladendorf O."/>
            <person name="Vincon V."/>
            <person name="Fuchs U."/>
            <person name="Sandrock B."/>
            <person name="Meng S."/>
            <person name="Ho E.C.H."/>
            <person name="Cahill M.J."/>
            <person name="Boyce K.J."/>
            <person name="Klose J."/>
            <person name="Klosterman S.J."/>
            <person name="Deelstra H.J."/>
            <person name="Ortiz-Castellanos L."/>
            <person name="Li W."/>
            <person name="Sanchez-Alonso P."/>
            <person name="Schreier P.H."/>
            <person name="Haeuser-Hahn I."/>
            <person name="Vaupel M."/>
            <person name="Koopmann E."/>
            <person name="Friedrich G."/>
            <person name="Voss H."/>
            <person name="Schlueter T."/>
            <person name="Margolis J."/>
            <person name="Platt D."/>
            <person name="Swimmer C."/>
            <person name="Gnirke A."/>
            <person name="Chen F."/>
            <person name="Vysotskaia V."/>
            <person name="Mannhaupt G."/>
            <person name="Gueldener U."/>
            <person name="Muensterkoetter M."/>
            <person name="Haase D."/>
            <person name="Oesterheld M."/>
            <person name="Mewes H.-W."/>
            <person name="Mauceli E.W."/>
            <person name="DeCaprio D."/>
            <person name="Wade C.M."/>
            <person name="Butler J."/>
            <person name="Young S.K."/>
            <person name="Jaffe D.B."/>
            <person name="Calvo S.E."/>
            <person name="Nusbaum C."/>
            <person name="Galagan J.E."/>
            <person name="Birren B.W."/>
        </authorList>
    </citation>
    <scope>NUCLEOTIDE SEQUENCE [LARGE SCALE GENOMIC DNA]</scope>
    <source>
        <strain>DSM 14603 / FGSC 9021 / UM521</strain>
    </source>
</reference>
<reference key="2">
    <citation type="submission" date="2014-09" db="EMBL/GenBank/DDBJ databases">
        <authorList>
            <person name="Gueldener U."/>
            <person name="Muensterkoetter M."/>
            <person name="Walter M.C."/>
            <person name="Mannhaupt G."/>
            <person name="Kahmann R."/>
        </authorList>
    </citation>
    <scope>GENOME REANNOTATION</scope>
    <source>
        <strain>DSM 14603 / FGSC 9021 / UM521</strain>
    </source>
</reference>
<reference key="3">
    <citation type="journal article" date="2001" name="J. Bacteriol.">
        <title>Characterization of the Ustilago maydis sid2 gene, encoding a multidomain peptide synthetase in the ferrichrome biosynthetic gene cluster.</title>
        <authorList>
            <person name="Yuan W.M."/>
            <person name="Gentil G.D."/>
            <person name="Budde A.D."/>
            <person name="Leong S.A."/>
        </authorList>
    </citation>
    <scope>NUCLEOTIDE SEQUENCE [GENOMIC DNA] OF 1-4082</scope>
</reference>
<keyword id="KW-0436">Ligase</keyword>
<keyword id="KW-0511">Multifunctional enzyme</keyword>
<keyword id="KW-0596">Phosphopantetheine</keyword>
<keyword id="KW-0597">Phosphoprotein</keyword>
<keyword id="KW-1185">Reference proteome</keyword>
<keyword id="KW-0677">Repeat</keyword>